<gene>
    <name type="primary">APOC2</name>
</gene>
<proteinExistence type="evidence at protein level"/>
<feature type="signal peptide" evidence="2">
    <location>
        <begin position="1"/>
        <end position="22"/>
    </location>
</feature>
<feature type="chain" id="PRO_0000002025" description="Proapolipoprotein C-II">
    <location>
        <begin position="23"/>
        <end position="101"/>
    </location>
</feature>
<feature type="chain" id="PRO_0000430840" description="Apolipoprotein C-II" evidence="1">
    <location>
        <begin position="29"/>
        <end position="101"/>
    </location>
</feature>
<feature type="region of interest" description="Lipid binding" evidence="1">
    <location>
        <begin position="66"/>
        <end position="74"/>
    </location>
</feature>
<feature type="region of interest" description="Lipoprotein lipase cofactor" evidence="1">
    <location>
        <begin position="78"/>
        <end position="101"/>
    </location>
</feature>
<feature type="sequence conflict" description="In Ref. 2; AA sequence." evidence="3" ref="2">
    <original>L</original>
    <variation>Q</variation>
    <location>
        <position position="25"/>
    </location>
</feature>
<feature type="sequence conflict" description="In Ref. 2; AA sequence." evidence="3" ref="2">
    <original>R</original>
    <variation>Q</variation>
    <location>
        <position position="39"/>
    </location>
</feature>
<evidence type="ECO:0000250" key="1">
    <source>
        <dbReference type="UniProtKB" id="P02655"/>
    </source>
</evidence>
<evidence type="ECO:0000269" key="2">
    <source>
    </source>
</evidence>
<evidence type="ECO:0000305" key="3"/>
<accession>P18658</accession>
<dbReference type="EMBL" id="M86345">
    <property type="protein sequence ID" value="AAA36835.1"/>
    <property type="molecule type" value="mRNA"/>
</dbReference>
<dbReference type="PIR" id="E26627">
    <property type="entry name" value="E26627"/>
</dbReference>
<dbReference type="PIR" id="I57492">
    <property type="entry name" value="I57492"/>
</dbReference>
<dbReference type="RefSeq" id="NP_001271640.1">
    <property type="nucleotide sequence ID" value="NM_001284711.1"/>
</dbReference>
<dbReference type="RefSeq" id="XP_015300138.1">
    <property type="nucleotide sequence ID" value="XM_015444652.3"/>
</dbReference>
<dbReference type="SMR" id="P18658"/>
<dbReference type="STRING" id="9541.ENSMFAP00000012478"/>
<dbReference type="Ensembl" id="ENSMFAT00000058527.2">
    <property type="protein sequence ID" value="ENSMFAP00000012478.1"/>
    <property type="gene ID" value="ENSMFAG00000024498.2"/>
</dbReference>
<dbReference type="GeneID" id="102116264"/>
<dbReference type="KEGG" id="mcf:102116264"/>
<dbReference type="CTD" id="344"/>
<dbReference type="VEuPathDB" id="HostDB:ENSMFAG00000024498"/>
<dbReference type="eggNOG" id="ENOG502SEJB">
    <property type="taxonomic scope" value="Eukaryota"/>
</dbReference>
<dbReference type="GeneTree" id="ENSGT00390000007913"/>
<dbReference type="OMA" id="GTHEPQE"/>
<dbReference type="Proteomes" id="UP000233100">
    <property type="component" value="Chromosome 19"/>
</dbReference>
<dbReference type="Bgee" id="ENSMFAG00000024498">
    <property type="expression patterns" value="Expressed in liver and 3 other cell types or tissues"/>
</dbReference>
<dbReference type="GO" id="GO:0042627">
    <property type="term" value="C:chylomicron"/>
    <property type="evidence" value="ECO:0007669"/>
    <property type="project" value="UniProtKB-KW"/>
</dbReference>
<dbReference type="GO" id="GO:0034363">
    <property type="term" value="C:intermediate-density lipoprotein particle"/>
    <property type="evidence" value="ECO:0007669"/>
    <property type="project" value="Ensembl"/>
</dbReference>
<dbReference type="GO" id="GO:0034362">
    <property type="term" value="C:low-density lipoprotein particle"/>
    <property type="evidence" value="ECO:0007669"/>
    <property type="project" value="UniProtKB-KW"/>
</dbReference>
<dbReference type="GO" id="GO:0034366">
    <property type="term" value="C:spherical high-density lipoprotein particle"/>
    <property type="evidence" value="ECO:0007669"/>
    <property type="project" value="Ensembl"/>
</dbReference>
<dbReference type="GO" id="GO:0034361">
    <property type="term" value="C:very-low-density lipoprotein particle"/>
    <property type="evidence" value="ECO:0007669"/>
    <property type="project" value="UniProtKB-KW"/>
</dbReference>
<dbReference type="GO" id="GO:0055102">
    <property type="term" value="F:lipase inhibitor activity"/>
    <property type="evidence" value="ECO:0007669"/>
    <property type="project" value="Ensembl"/>
</dbReference>
<dbReference type="GO" id="GO:0008289">
    <property type="term" value="F:lipid binding"/>
    <property type="evidence" value="ECO:0007669"/>
    <property type="project" value="Ensembl"/>
</dbReference>
<dbReference type="GO" id="GO:0060230">
    <property type="term" value="F:lipoprotein lipase activator activity"/>
    <property type="evidence" value="ECO:0007669"/>
    <property type="project" value="Ensembl"/>
</dbReference>
<dbReference type="GO" id="GO:0016004">
    <property type="term" value="F:phospholipase activator activity"/>
    <property type="evidence" value="ECO:0007669"/>
    <property type="project" value="Ensembl"/>
</dbReference>
<dbReference type="GO" id="GO:0043274">
    <property type="term" value="F:phospholipase binding"/>
    <property type="evidence" value="ECO:0007669"/>
    <property type="project" value="Ensembl"/>
</dbReference>
<dbReference type="GO" id="GO:0033344">
    <property type="term" value="P:cholesterol efflux"/>
    <property type="evidence" value="ECO:0007669"/>
    <property type="project" value="Ensembl"/>
</dbReference>
<dbReference type="GO" id="GO:0034382">
    <property type="term" value="P:chylomicron remnant clearance"/>
    <property type="evidence" value="ECO:0007669"/>
    <property type="project" value="Ensembl"/>
</dbReference>
<dbReference type="GO" id="GO:0034371">
    <property type="term" value="P:chylomicron remodeling"/>
    <property type="evidence" value="ECO:0007669"/>
    <property type="project" value="Ensembl"/>
</dbReference>
<dbReference type="GO" id="GO:0034384">
    <property type="term" value="P:high-density lipoprotein particle clearance"/>
    <property type="evidence" value="ECO:0007669"/>
    <property type="project" value="Ensembl"/>
</dbReference>
<dbReference type="GO" id="GO:0016042">
    <property type="term" value="P:lipid catabolic process"/>
    <property type="evidence" value="ECO:0007669"/>
    <property type="project" value="UniProtKB-KW"/>
</dbReference>
<dbReference type="GO" id="GO:0032375">
    <property type="term" value="P:negative regulation of cholesterol transport"/>
    <property type="evidence" value="ECO:0007669"/>
    <property type="project" value="Ensembl"/>
</dbReference>
<dbReference type="GO" id="GO:0045833">
    <property type="term" value="P:negative regulation of lipid metabolic process"/>
    <property type="evidence" value="ECO:0007669"/>
    <property type="project" value="Ensembl"/>
</dbReference>
<dbReference type="GO" id="GO:0048261">
    <property type="term" value="P:negative regulation of receptor-mediated endocytosis"/>
    <property type="evidence" value="ECO:0007669"/>
    <property type="project" value="Ensembl"/>
</dbReference>
<dbReference type="GO" id="GO:0010916">
    <property type="term" value="P:negative regulation of very-low-density lipoprotein particle clearance"/>
    <property type="evidence" value="ECO:0007669"/>
    <property type="project" value="Ensembl"/>
</dbReference>
<dbReference type="GO" id="GO:0033700">
    <property type="term" value="P:phospholipid efflux"/>
    <property type="evidence" value="ECO:0007669"/>
    <property type="project" value="Ensembl"/>
</dbReference>
<dbReference type="GO" id="GO:0045723">
    <property type="term" value="P:positive regulation of fatty acid biosynthetic process"/>
    <property type="evidence" value="ECO:0007669"/>
    <property type="project" value="Ensembl"/>
</dbReference>
<dbReference type="GO" id="GO:0060697">
    <property type="term" value="P:positive regulation of phospholipid catabolic process"/>
    <property type="evidence" value="ECO:0007669"/>
    <property type="project" value="Ensembl"/>
</dbReference>
<dbReference type="GO" id="GO:0010898">
    <property type="term" value="P:positive regulation of triglyceride catabolic process"/>
    <property type="evidence" value="ECO:0007669"/>
    <property type="project" value="Ensembl"/>
</dbReference>
<dbReference type="GO" id="GO:0010902">
    <property type="term" value="P:positive regulation of very-low-density lipoprotein particle remodeling"/>
    <property type="evidence" value="ECO:0007669"/>
    <property type="project" value="Ensembl"/>
</dbReference>
<dbReference type="GO" id="GO:0070328">
    <property type="term" value="P:triglyceride homeostasis"/>
    <property type="evidence" value="ECO:0007669"/>
    <property type="project" value="Ensembl"/>
</dbReference>
<dbReference type="FunFam" id="1.10.1440.10:FF:000001">
    <property type="entry name" value="Apolipoprotein C-II"/>
    <property type="match status" value="1"/>
</dbReference>
<dbReference type="Gene3D" id="1.10.1440.10">
    <property type="entry name" value="Apolipoprotein C-II"/>
    <property type="match status" value="1"/>
</dbReference>
<dbReference type="InterPro" id="IPR008019">
    <property type="entry name" value="Apo-CII"/>
</dbReference>
<dbReference type="InterPro" id="IPR023121">
    <property type="entry name" value="ApoC-II_dom_sf"/>
</dbReference>
<dbReference type="PANTHER" id="PTHR16566">
    <property type="entry name" value="APOLIPOPROTEIN C-II"/>
    <property type="match status" value="1"/>
</dbReference>
<dbReference type="PANTHER" id="PTHR16566:SF0">
    <property type="entry name" value="APOLIPOPROTEIN C-II"/>
    <property type="match status" value="1"/>
</dbReference>
<dbReference type="Pfam" id="PF05355">
    <property type="entry name" value="Apo-CII"/>
    <property type="match status" value="1"/>
</dbReference>
<comment type="function">
    <text evidence="1">Component of chylomicrons, very low-density lipoproteins (VLDL), low-density lipoproteins (LDL), and high-density lipoproteins (HDL) in plasma. Plays an important role in lipoprotein metabolism as an activator of lipoprotein lipase. Both proapolipoprotein C-II and apolipoprotein C-II can activate lipoprotein lipase.</text>
</comment>
<comment type="subcellular location">
    <subcellularLocation>
        <location evidence="1">Secreted</location>
    </subcellularLocation>
</comment>
<comment type="PTM">
    <text evidence="1">Proapolipoprotein C-II is synthesized as a sialic acid containing glycoprotein which is subsequently desialylated prior to its proteolytic processing.</text>
</comment>
<comment type="PTM">
    <text evidence="1">Proapolipoprotein C-II, the major form found in plasma undergoes proteolytic cleavage of its N-terminal hexapeptide to generate apolipoprotein C-II, which occurs as the minor form in plasma.</text>
</comment>
<comment type="similarity">
    <text evidence="3">Belongs to the apolipoprotein C2 family.</text>
</comment>
<name>APOC2_MACFA</name>
<sequence>MGTRFLLALCLVLLVLGFEVQGAQLPQQDEPPSPALLSRVQESLSSYWESAKAAAQKLYEKTYLPAVDEKLRDLYSKSTAAMSTYTGIFTDQVLSVLKGEE</sequence>
<keyword id="KW-0162">Chylomicron</keyword>
<keyword id="KW-0903">Direct protein sequencing</keyword>
<keyword id="KW-0325">Glycoprotein</keyword>
<keyword id="KW-0345">HDL</keyword>
<keyword id="KW-0427">LDL</keyword>
<keyword id="KW-0442">Lipid degradation</keyword>
<keyword id="KW-0443">Lipid metabolism</keyword>
<keyword id="KW-0445">Lipid transport</keyword>
<keyword id="KW-1185">Reference proteome</keyword>
<keyword id="KW-0964">Secreted</keyword>
<keyword id="KW-0730">Sialic acid</keyword>
<keyword id="KW-0732">Signal</keyword>
<keyword id="KW-0813">Transport</keyword>
<keyword id="KW-0850">VLDL</keyword>
<reference key="1">
    <citation type="journal article" date="1989" name="Mol. Cell. Biochem.">
        <title>Purification, cloning and nucleotide sequence determination of cynomolgus monkey apolipoprotein C-II: comparison to the human sequence.</title>
        <authorList>
            <person name="Whitted B.E."/>
            <person name="Castle C.K."/>
            <person name="Polites H.G."/>
            <person name="Melchior G.W."/>
            <person name="Marotti K.R."/>
        </authorList>
    </citation>
    <scope>NUCLEOTIDE SEQUENCE [MRNA]</scope>
</reference>
<reference key="2">
    <citation type="journal article" date="1987" name="Biochemistry">
        <title>Homologues of the human C and A apolipoproteins in the Macaca fascicularis (cynomolgus) monkey.</title>
        <authorList>
            <person name="Herbert P.N."/>
            <person name="Bausserman L.L."/>
            <person name="Lynch K.M."/>
            <person name="Saritelli A.L."/>
            <person name="Kantor M.A."/>
            <person name="Nicolosi R.J."/>
            <person name="Shulman R.S."/>
        </authorList>
    </citation>
    <scope>PROTEIN SEQUENCE OF 23-49</scope>
</reference>
<organism>
    <name type="scientific">Macaca fascicularis</name>
    <name type="common">Crab-eating macaque</name>
    <name type="synonym">Cynomolgus monkey</name>
    <dbReference type="NCBI Taxonomy" id="9541"/>
    <lineage>
        <taxon>Eukaryota</taxon>
        <taxon>Metazoa</taxon>
        <taxon>Chordata</taxon>
        <taxon>Craniata</taxon>
        <taxon>Vertebrata</taxon>
        <taxon>Euteleostomi</taxon>
        <taxon>Mammalia</taxon>
        <taxon>Eutheria</taxon>
        <taxon>Euarchontoglires</taxon>
        <taxon>Primates</taxon>
        <taxon>Haplorrhini</taxon>
        <taxon>Catarrhini</taxon>
        <taxon>Cercopithecidae</taxon>
        <taxon>Cercopithecinae</taxon>
        <taxon>Macaca</taxon>
    </lineage>
</organism>
<protein>
    <recommendedName>
        <fullName>Apolipoprotein C-II</fullName>
        <shortName>Apo-CII</shortName>
        <shortName>ApoC-II</shortName>
    </recommendedName>
    <alternativeName>
        <fullName>Apolipoprotein C2</fullName>
    </alternativeName>
    <component>
        <recommendedName>
            <fullName>Proapolipoprotein C-II</fullName>
            <shortName>ProapoC-II</shortName>
        </recommendedName>
    </component>
</protein>